<feature type="chain" id="PRO_1000092985" description="Peptidyl-tRNA hydrolase">
    <location>
        <begin position="1"/>
        <end position="194"/>
    </location>
</feature>
<feature type="active site" description="Proton acceptor" evidence="1">
    <location>
        <position position="22"/>
    </location>
</feature>
<feature type="binding site" evidence="1">
    <location>
        <position position="17"/>
    </location>
    <ligand>
        <name>tRNA</name>
        <dbReference type="ChEBI" id="CHEBI:17843"/>
    </ligand>
</feature>
<feature type="binding site" evidence="1">
    <location>
        <position position="68"/>
    </location>
    <ligand>
        <name>tRNA</name>
        <dbReference type="ChEBI" id="CHEBI:17843"/>
    </ligand>
</feature>
<feature type="binding site" evidence="1">
    <location>
        <position position="70"/>
    </location>
    <ligand>
        <name>tRNA</name>
        <dbReference type="ChEBI" id="CHEBI:17843"/>
    </ligand>
</feature>
<feature type="binding site" evidence="1">
    <location>
        <position position="116"/>
    </location>
    <ligand>
        <name>tRNA</name>
        <dbReference type="ChEBI" id="CHEBI:17843"/>
    </ligand>
</feature>
<feature type="site" description="Discriminates between blocked and unblocked aminoacyl-tRNA" evidence="1">
    <location>
        <position position="12"/>
    </location>
</feature>
<feature type="site" description="Stabilizes the basic form of H active site to accept a proton" evidence="1">
    <location>
        <position position="95"/>
    </location>
</feature>
<evidence type="ECO:0000255" key="1">
    <source>
        <dbReference type="HAMAP-Rule" id="MF_00083"/>
    </source>
</evidence>
<sequence length="194" mass="20953">MSNIKLIVGLANPGEKYAQTRHNAGAWYVQELARVCGATLVADSKYFGLTARVTLHGKDVRLLIPSTFMNLSGKSVGAMANFFRIEADEILVAHDELDMEPGVAKFKLGGGHGGHNGLKDIIASLANNKGFYRLRIGIGHPGDKSQVSNYVLGKAPGTEQAAIEDVIDEAVRSTEVLFNQDMAKAMNRLHAYKA</sequence>
<name>PTH_SHEWM</name>
<comment type="function">
    <text evidence="1">Hydrolyzes ribosome-free peptidyl-tRNAs (with 1 or more amino acids incorporated), which drop off the ribosome during protein synthesis, or as a result of ribosome stalling.</text>
</comment>
<comment type="function">
    <text evidence="1">Catalyzes the release of premature peptidyl moieties from peptidyl-tRNA molecules trapped in stalled 50S ribosomal subunits, and thus maintains levels of free tRNAs and 50S ribosomes.</text>
</comment>
<comment type="catalytic activity">
    <reaction evidence="1">
        <text>an N-acyl-L-alpha-aminoacyl-tRNA + H2O = an N-acyl-L-amino acid + a tRNA + H(+)</text>
        <dbReference type="Rhea" id="RHEA:54448"/>
        <dbReference type="Rhea" id="RHEA-COMP:10123"/>
        <dbReference type="Rhea" id="RHEA-COMP:13883"/>
        <dbReference type="ChEBI" id="CHEBI:15377"/>
        <dbReference type="ChEBI" id="CHEBI:15378"/>
        <dbReference type="ChEBI" id="CHEBI:59874"/>
        <dbReference type="ChEBI" id="CHEBI:78442"/>
        <dbReference type="ChEBI" id="CHEBI:138191"/>
        <dbReference type="EC" id="3.1.1.29"/>
    </reaction>
</comment>
<comment type="subunit">
    <text evidence="1">Monomer.</text>
</comment>
<comment type="subcellular location">
    <subcellularLocation>
        <location evidence="1">Cytoplasm</location>
    </subcellularLocation>
</comment>
<comment type="similarity">
    <text evidence="1">Belongs to the PTH family.</text>
</comment>
<dbReference type="EC" id="3.1.1.29" evidence="1"/>
<dbReference type="EMBL" id="CP000961">
    <property type="protein sequence ID" value="ACA87953.1"/>
    <property type="molecule type" value="Genomic_DNA"/>
</dbReference>
<dbReference type="RefSeq" id="WP_012326285.1">
    <property type="nucleotide sequence ID" value="NC_010506.1"/>
</dbReference>
<dbReference type="SMR" id="B1KDV1"/>
<dbReference type="STRING" id="392500.Swoo_3693"/>
<dbReference type="KEGG" id="swd:Swoo_3693"/>
<dbReference type="eggNOG" id="COG0193">
    <property type="taxonomic scope" value="Bacteria"/>
</dbReference>
<dbReference type="HOGENOM" id="CLU_062456_3_1_6"/>
<dbReference type="Proteomes" id="UP000002168">
    <property type="component" value="Chromosome"/>
</dbReference>
<dbReference type="GO" id="GO:0005737">
    <property type="term" value="C:cytoplasm"/>
    <property type="evidence" value="ECO:0007669"/>
    <property type="project" value="UniProtKB-SubCell"/>
</dbReference>
<dbReference type="GO" id="GO:0004045">
    <property type="term" value="F:peptidyl-tRNA hydrolase activity"/>
    <property type="evidence" value="ECO:0007669"/>
    <property type="project" value="UniProtKB-UniRule"/>
</dbReference>
<dbReference type="GO" id="GO:0000049">
    <property type="term" value="F:tRNA binding"/>
    <property type="evidence" value="ECO:0007669"/>
    <property type="project" value="UniProtKB-UniRule"/>
</dbReference>
<dbReference type="GO" id="GO:0006515">
    <property type="term" value="P:protein quality control for misfolded or incompletely synthesized proteins"/>
    <property type="evidence" value="ECO:0007669"/>
    <property type="project" value="UniProtKB-UniRule"/>
</dbReference>
<dbReference type="GO" id="GO:0072344">
    <property type="term" value="P:rescue of stalled ribosome"/>
    <property type="evidence" value="ECO:0007669"/>
    <property type="project" value="UniProtKB-UniRule"/>
</dbReference>
<dbReference type="CDD" id="cd00462">
    <property type="entry name" value="PTH"/>
    <property type="match status" value="1"/>
</dbReference>
<dbReference type="FunFam" id="3.40.50.1470:FF:000001">
    <property type="entry name" value="Peptidyl-tRNA hydrolase"/>
    <property type="match status" value="1"/>
</dbReference>
<dbReference type="Gene3D" id="3.40.50.1470">
    <property type="entry name" value="Peptidyl-tRNA hydrolase"/>
    <property type="match status" value="1"/>
</dbReference>
<dbReference type="HAMAP" id="MF_00083">
    <property type="entry name" value="Pept_tRNA_hydro_bact"/>
    <property type="match status" value="1"/>
</dbReference>
<dbReference type="InterPro" id="IPR001328">
    <property type="entry name" value="Pept_tRNA_hydro"/>
</dbReference>
<dbReference type="InterPro" id="IPR018171">
    <property type="entry name" value="Pept_tRNA_hydro_CS"/>
</dbReference>
<dbReference type="InterPro" id="IPR036416">
    <property type="entry name" value="Pept_tRNA_hydro_sf"/>
</dbReference>
<dbReference type="NCBIfam" id="TIGR00447">
    <property type="entry name" value="pth"/>
    <property type="match status" value="1"/>
</dbReference>
<dbReference type="PANTHER" id="PTHR17224">
    <property type="entry name" value="PEPTIDYL-TRNA HYDROLASE"/>
    <property type="match status" value="1"/>
</dbReference>
<dbReference type="PANTHER" id="PTHR17224:SF1">
    <property type="entry name" value="PEPTIDYL-TRNA HYDROLASE"/>
    <property type="match status" value="1"/>
</dbReference>
<dbReference type="Pfam" id="PF01195">
    <property type="entry name" value="Pept_tRNA_hydro"/>
    <property type="match status" value="1"/>
</dbReference>
<dbReference type="SUPFAM" id="SSF53178">
    <property type="entry name" value="Peptidyl-tRNA hydrolase-like"/>
    <property type="match status" value="1"/>
</dbReference>
<dbReference type="PROSITE" id="PS01196">
    <property type="entry name" value="PEPT_TRNA_HYDROL_2"/>
    <property type="match status" value="1"/>
</dbReference>
<proteinExistence type="inferred from homology"/>
<organism>
    <name type="scientific">Shewanella woodyi (strain ATCC 51908 / MS32)</name>
    <dbReference type="NCBI Taxonomy" id="392500"/>
    <lineage>
        <taxon>Bacteria</taxon>
        <taxon>Pseudomonadati</taxon>
        <taxon>Pseudomonadota</taxon>
        <taxon>Gammaproteobacteria</taxon>
        <taxon>Alteromonadales</taxon>
        <taxon>Shewanellaceae</taxon>
        <taxon>Shewanella</taxon>
    </lineage>
</organism>
<reference key="1">
    <citation type="submission" date="2008-02" db="EMBL/GenBank/DDBJ databases">
        <title>Complete sequence of Shewanella woodyi ATCC 51908.</title>
        <authorList>
            <consortium name="US DOE Joint Genome Institute"/>
            <person name="Copeland A."/>
            <person name="Lucas S."/>
            <person name="Lapidus A."/>
            <person name="Glavina del Rio T."/>
            <person name="Dalin E."/>
            <person name="Tice H."/>
            <person name="Bruce D."/>
            <person name="Goodwin L."/>
            <person name="Pitluck S."/>
            <person name="Sims D."/>
            <person name="Brettin T."/>
            <person name="Detter J.C."/>
            <person name="Han C."/>
            <person name="Kuske C.R."/>
            <person name="Schmutz J."/>
            <person name="Larimer F."/>
            <person name="Land M."/>
            <person name="Hauser L."/>
            <person name="Kyrpides N."/>
            <person name="Lykidis A."/>
            <person name="Zhao J.-S."/>
            <person name="Richardson P."/>
        </authorList>
    </citation>
    <scope>NUCLEOTIDE SEQUENCE [LARGE SCALE GENOMIC DNA]</scope>
    <source>
        <strain>ATCC 51908 / MS32</strain>
    </source>
</reference>
<protein>
    <recommendedName>
        <fullName evidence="1">Peptidyl-tRNA hydrolase</fullName>
        <shortName evidence="1">Pth</shortName>
        <ecNumber evidence="1">3.1.1.29</ecNumber>
    </recommendedName>
</protein>
<accession>B1KDV1</accession>
<gene>
    <name evidence="1" type="primary">pth</name>
    <name type="ordered locus">Swoo_3693</name>
</gene>
<keyword id="KW-0963">Cytoplasm</keyword>
<keyword id="KW-0378">Hydrolase</keyword>
<keyword id="KW-1185">Reference proteome</keyword>
<keyword id="KW-0694">RNA-binding</keyword>
<keyword id="KW-0820">tRNA-binding</keyword>